<proteinExistence type="inferred from homology"/>
<comment type="function">
    <text evidence="1">Acts as a processive, ATP-dependent zinc metallopeptidase for both cytoplasmic and membrane proteins. Plays a role in the quality control of integral membrane proteins.</text>
</comment>
<comment type="cofactor">
    <cofactor evidence="1">
        <name>Zn(2+)</name>
        <dbReference type="ChEBI" id="CHEBI:29105"/>
    </cofactor>
    <text evidence="1">Binds 1 zinc ion per subunit.</text>
</comment>
<comment type="subunit">
    <text evidence="1">Homohexamer.</text>
</comment>
<comment type="subcellular location">
    <subcellularLocation>
        <location evidence="1">Cell membrane</location>
        <topology evidence="1">Multi-pass membrane protein</topology>
        <orientation evidence="1">Cytoplasmic side</orientation>
    </subcellularLocation>
</comment>
<comment type="similarity">
    <text evidence="1">In the central section; belongs to the AAA ATPase family.</text>
</comment>
<comment type="similarity">
    <text evidence="1">In the C-terminal section; belongs to the peptidase M41 family.</text>
</comment>
<comment type="sequence caution" evidence="2">
    <conflict type="erroneous initiation">
        <sequence resource="EMBL-CDS" id="BAB13085"/>
    </conflict>
    <text>Truncated N-terminus.</text>
</comment>
<feature type="chain" id="PRO_0000084628" description="ATP-dependent zinc metalloprotease FtsH">
    <location>
        <begin position="1"/>
        <end position="611"/>
    </location>
</feature>
<feature type="topological domain" description="Cytoplasmic" evidence="1">
    <location>
        <position position="1"/>
    </location>
</feature>
<feature type="transmembrane region" description="Helical" evidence="1">
    <location>
        <begin position="2"/>
        <end position="22"/>
    </location>
</feature>
<feature type="topological domain" description="Extracellular" evidence="1">
    <location>
        <begin position="23"/>
        <end position="98"/>
    </location>
</feature>
<feature type="transmembrane region" description="Helical" evidence="1">
    <location>
        <begin position="99"/>
        <end position="119"/>
    </location>
</feature>
<feature type="topological domain" description="Cytoplasmic" evidence="1">
    <location>
        <begin position="120"/>
        <end position="611"/>
    </location>
</feature>
<feature type="active site" evidence="1">
    <location>
        <position position="415"/>
    </location>
</feature>
<feature type="binding site" evidence="1">
    <location>
        <begin position="192"/>
        <end position="199"/>
    </location>
    <ligand>
        <name>ATP</name>
        <dbReference type="ChEBI" id="CHEBI:30616"/>
    </ligand>
</feature>
<feature type="binding site" evidence="1">
    <location>
        <position position="414"/>
    </location>
    <ligand>
        <name>Zn(2+)</name>
        <dbReference type="ChEBI" id="CHEBI:29105"/>
        <note>catalytic</note>
    </ligand>
</feature>
<feature type="binding site" evidence="1">
    <location>
        <position position="418"/>
    </location>
    <ligand>
        <name>Zn(2+)</name>
        <dbReference type="ChEBI" id="CHEBI:29105"/>
        <note>catalytic</note>
    </ligand>
</feature>
<feature type="binding site" evidence="1">
    <location>
        <position position="492"/>
    </location>
    <ligand>
        <name>Zn(2+)</name>
        <dbReference type="ChEBI" id="CHEBI:29105"/>
        <note>catalytic</note>
    </ligand>
</feature>
<keyword id="KW-0067">ATP-binding</keyword>
<keyword id="KW-1003">Cell membrane</keyword>
<keyword id="KW-0378">Hydrolase</keyword>
<keyword id="KW-0472">Membrane</keyword>
<keyword id="KW-0479">Metal-binding</keyword>
<keyword id="KW-0482">Metalloprotease</keyword>
<keyword id="KW-0547">Nucleotide-binding</keyword>
<keyword id="KW-0645">Protease</keyword>
<keyword id="KW-1185">Reference proteome</keyword>
<keyword id="KW-0812">Transmembrane</keyword>
<keyword id="KW-1133">Transmembrane helix</keyword>
<keyword id="KW-0862">Zinc</keyword>
<organism>
    <name type="scientific">Buchnera aphidicola subsp. Acyrthosiphon pisum (strain APS)</name>
    <name type="common">Acyrthosiphon pisum symbiotic bacterium</name>
    <dbReference type="NCBI Taxonomy" id="107806"/>
    <lineage>
        <taxon>Bacteria</taxon>
        <taxon>Pseudomonadati</taxon>
        <taxon>Pseudomonadota</taxon>
        <taxon>Gammaproteobacteria</taxon>
        <taxon>Enterobacterales</taxon>
        <taxon>Erwiniaceae</taxon>
        <taxon>Buchnera</taxon>
    </lineage>
</organism>
<dbReference type="EC" id="3.4.24.-" evidence="1"/>
<dbReference type="EMBL" id="BA000003">
    <property type="protein sequence ID" value="BAB13085.1"/>
    <property type="status" value="ALT_INIT"/>
    <property type="molecule type" value="Genomic_DNA"/>
</dbReference>
<dbReference type="RefSeq" id="NP_240199.2">
    <property type="nucleotide sequence ID" value="NC_002528.1"/>
</dbReference>
<dbReference type="RefSeq" id="WP_010896092.1">
    <property type="nucleotide sequence ID" value="NC_002528.1"/>
</dbReference>
<dbReference type="SMR" id="P57462"/>
<dbReference type="STRING" id="563178.BUAP5A_375"/>
<dbReference type="MEROPS" id="M41.001"/>
<dbReference type="EnsemblBacteria" id="BAB13085">
    <property type="protein sequence ID" value="BAB13085"/>
    <property type="gene ID" value="BAB13085"/>
</dbReference>
<dbReference type="KEGG" id="buc:BU382"/>
<dbReference type="PATRIC" id="fig|107806.10.peg.396"/>
<dbReference type="eggNOG" id="COG0465">
    <property type="taxonomic scope" value="Bacteria"/>
</dbReference>
<dbReference type="HOGENOM" id="CLU_000688_16_0_6"/>
<dbReference type="Proteomes" id="UP000001806">
    <property type="component" value="Chromosome"/>
</dbReference>
<dbReference type="GO" id="GO:0005886">
    <property type="term" value="C:plasma membrane"/>
    <property type="evidence" value="ECO:0007669"/>
    <property type="project" value="UniProtKB-SubCell"/>
</dbReference>
<dbReference type="GO" id="GO:0005524">
    <property type="term" value="F:ATP binding"/>
    <property type="evidence" value="ECO:0007669"/>
    <property type="project" value="UniProtKB-UniRule"/>
</dbReference>
<dbReference type="GO" id="GO:0016887">
    <property type="term" value="F:ATP hydrolysis activity"/>
    <property type="evidence" value="ECO:0007669"/>
    <property type="project" value="UniProtKB-UniRule"/>
</dbReference>
<dbReference type="GO" id="GO:0004176">
    <property type="term" value="F:ATP-dependent peptidase activity"/>
    <property type="evidence" value="ECO:0007669"/>
    <property type="project" value="InterPro"/>
</dbReference>
<dbReference type="GO" id="GO:0004222">
    <property type="term" value="F:metalloendopeptidase activity"/>
    <property type="evidence" value="ECO:0007669"/>
    <property type="project" value="InterPro"/>
</dbReference>
<dbReference type="GO" id="GO:0008270">
    <property type="term" value="F:zinc ion binding"/>
    <property type="evidence" value="ECO:0007669"/>
    <property type="project" value="UniProtKB-UniRule"/>
</dbReference>
<dbReference type="GO" id="GO:0030163">
    <property type="term" value="P:protein catabolic process"/>
    <property type="evidence" value="ECO:0007669"/>
    <property type="project" value="UniProtKB-UniRule"/>
</dbReference>
<dbReference type="GO" id="GO:0006508">
    <property type="term" value="P:proteolysis"/>
    <property type="evidence" value="ECO:0007669"/>
    <property type="project" value="UniProtKB-KW"/>
</dbReference>
<dbReference type="CDD" id="cd19501">
    <property type="entry name" value="RecA-like_FtsH"/>
    <property type="match status" value="1"/>
</dbReference>
<dbReference type="FunFam" id="1.10.8.60:FF:000001">
    <property type="entry name" value="ATP-dependent zinc metalloprotease FtsH"/>
    <property type="match status" value="1"/>
</dbReference>
<dbReference type="FunFam" id="1.20.58.760:FF:000001">
    <property type="entry name" value="ATP-dependent zinc metalloprotease FtsH"/>
    <property type="match status" value="1"/>
</dbReference>
<dbReference type="FunFam" id="3.30.720.210:FF:000001">
    <property type="entry name" value="ATP-dependent zinc metalloprotease FtsH"/>
    <property type="match status" value="1"/>
</dbReference>
<dbReference type="FunFam" id="3.40.50.300:FF:000001">
    <property type="entry name" value="ATP-dependent zinc metalloprotease FtsH"/>
    <property type="match status" value="1"/>
</dbReference>
<dbReference type="Gene3D" id="1.10.8.60">
    <property type="match status" value="1"/>
</dbReference>
<dbReference type="Gene3D" id="3.30.720.210">
    <property type="match status" value="1"/>
</dbReference>
<dbReference type="Gene3D" id="3.40.50.300">
    <property type="entry name" value="P-loop containing nucleotide triphosphate hydrolases"/>
    <property type="match status" value="1"/>
</dbReference>
<dbReference type="Gene3D" id="1.20.58.760">
    <property type="entry name" value="Peptidase M41"/>
    <property type="match status" value="1"/>
</dbReference>
<dbReference type="HAMAP" id="MF_01458">
    <property type="entry name" value="FtsH"/>
    <property type="match status" value="1"/>
</dbReference>
<dbReference type="InterPro" id="IPR003593">
    <property type="entry name" value="AAA+_ATPase"/>
</dbReference>
<dbReference type="InterPro" id="IPR041569">
    <property type="entry name" value="AAA_lid_3"/>
</dbReference>
<dbReference type="InterPro" id="IPR003959">
    <property type="entry name" value="ATPase_AAA_core"/>
</dbReference>
<dbReference type="InterPro" id="IPR003960">
    <property type="entry name" value="ATPase_AAA_CS"/>
</dbReference>
<dbReference type="InterPro" id="IPR005936">
    <property type="entry name" value="FtsH"/>
</dbReference>
<dbReference type="InterPro" id="IPR027417">
    <property type="entry name" value="P-loop_NTPase"/>
</dbReference>
<dbReference type="InterPro" id="IPR011546">
    <property type="entry name" value="Pept_M41_FtsH_extracell"/>
</dbReference>
<dbReference type="InterPro" id="IPR000642">
    <property type="entry name" value="Peptidase_M41"/>
</dbReference>
<dbReference type="InterPro" id="IPR037219">
    <property type="entry name" value="Peptidase_M41-like"/>
</dbReference>
<dbReference type="NCBIfam" id="TIGR01241">
    <property type="entry name" value="FtsH_fam"/>
    <property type="match status" value="1"/>
</dbReference>
<dbReference type="NCBIfam" id="NF008004">
    <property type="entry name" value="PRK10733.1"/>
    <property type="match status" value="1"/>
</dbReference>
<dbReference type="PANTHER" id="PTHR23076:SF97">
    <property type="entry name" value="ATP-DEPENDENT ZINC METALLOPROTEASE YME1L1"/>
    <property type="match status" value="1"/>
</dbReference>
<dbReference type="PANTHER" id="PTHR23076">
    <property type="entry name" value="METALLOPROTEASE M41 FTSH"/>
    <property type="match status" value="1"/>
</dbReference>
<dbReference type="Pfam" id="PF00004">
    <property type="entry name" value="AAA"/>
    <property type="match status" value="1"/>
</dbReference>
<dbReference type="Pfam" id="PF17862">
    <property type="entry name" value="AAA_lid_3"/>
    <property type="match status" value="1"/>
</dbReference>
<dbReference type="Pfam" id="PF06480">
    <property type="entry name" value="FtsH_ext"/>
    <property type="match status" value="1"/>
</dbReference>
<dbReference type="Pfam" id="PF01434">
    <property type="entry name" value="Peptidase_M41"/>
    <property type="match status" value="1"/>
</dbReference>
<dbReference type="SMART" id="SM00382">
    <property type="entry name" value="AAA"/>
    <property type="match status" value="1"/>
</dbReference>
<dbReference type="SUPFAM" id="SSF140990">
    <property type="entry name" value="FtsH protease domain-like"/>
    <property type="match status" value="1"/>
</dbReference>
<dbReference type="SUPFAM" id="SSF52540">
    <property type="entry name" value="P-loop containing nucleoside triphosphate hydrolases"/>
    <property type="match status" value="1"/>
</dbReference>
<dbReference type="PROSITE" id="PS00674">
    <property type="entry name" value="AAA"/>
    <property type="match status" value="1"/>
</dbReference>
<sequence length="611" mass="68325">MVKNLIFWLVITVVLMSIFQNFNTNDVNNHKVDYSTFLSEVNQDQIREAYINGRMISVTKKDSSKYTTYIPINDPKLLDNLLVKRVKIIGAIPEEPSLFISILISWFPMLLLIGVWIFFMRQMQMGGGKGAMSFGKSKARMLSEDQIQTTFADVAGCDEAKEEVSELVEYLKEPSRFQKLGGKIPKGILMVGPPGTGKTLLAKAIAGEAKVPFFTISGSDFVEMFVGVGASRVRDMFEHSRKSAPCIIFIDEIDAVGRQRGAGLGGGHDEREQTLNQMLVEMDGFDGNEGIILIAATNRPDVLDPALLRPGRFDRQVIVALPDIRGREQILKVHMRKVPLSKDVDPMIIARGTPGFSGADLANLVNEAALFAARLDKRVVSMLEFERAKDKMMMGSERRSMVMSDFQKESTAYHEAGHVIIGRLVPDHDPAHKVTIIPRGRALGVTFFLPESDTLSISRQKLESQISTLYGGRLAEEIIYGAKNVSTGAYNDIKIATSLAKNMVTQWGFSEKLGPLLYAEEEGEIFLGRSVAKAKHMSDETARIIDEEVKLLIEINYSRARNILNENIDILHAMKEALIKYETIDAFQIDDLMKRREVRQPKGWIETDTNK</sequence>
<protein>
    <recommendedName>
        <fullName evidence="1">ATP-dependent zinc metalloprotease FtsH</fullName>
        <ecNumber evidence="1">3.4.24.-</ecNumber>
    </recommendedName>
</protein>
<name>FTSH_BUCAI</name>
<evidence type="ECO:0000255" key="1">
    <source>
        <dbReference type="HAMAP-Rule" id="MF_01458"/>
    </source>
</evidence>
<evidence type="ECO:0000305" key="2"/>
<gene>
    <name evidence="1" type="primary">ftsH</name>
    <name type="synonym">hflB</name>
    <name type="ordered locus">BU382</name>
</gene>
<reference key="1">
    <citation type="journal article" date="2000" name="Nature">
        <title>Genome sequence of the endocellular bacterial symbiont of aphids Buchnera sp. APS.</title>
        <authorList>
            <person name="Shigenobu S."/>
            <person name="Watanabe H."/>
            <person name="Hattori M."/>
            <person name="Sakaki Y."/>
            <person name="Ishikawa H."/>
        </authorList>
    </citation>
    <scope>NUCLEOTIDE SEQUENCE [LARGE SCALE GENOMIC DNA]</scope>
    <source>
        <strain>APS</strain>
    </source>
</reference>
<accession>P57462</accession>